<reference evidence="6" key="1">
    <citation type="journal article" date="2009" name="J. Plant Physiol.">
        <title>Analysis of the soluble cell wall proteome of gymnosperms.</title>
        <authorList>
            <person name="Uzal E.N."/>
            <person name="Gomez-Ros L.V."/>
            <person name="Hernandez J.A."/>
            <person name="Pedreno M.A."/>
            <person name="Cuello J."/>
            <person name="Ros Barcelo A."/>
        </authorList>
    </citation>
    <scope>PROTEIN SEQUENCE</scope>
    <scope>SUBCELLULAR LOCATION</scope>
    <source>
        <tissue evidence="4">Callus</tissue>
    </source>
</reference>
<proteinExistence type="evidence at protein level"/>
<name>PER3_CYCRE</name>
<organism>
    <name type="scientific">Cycas revoluta</name>
    <name type="common">Sago palm</name>
    <dbReference type="NCBI Taxonomy" id="3396"/>
    <lineage>
        <taxon>Eukaryota</taxon>
        <taxon>Viridiplantae</taxon>
        <taxon>Streptophyta</taxon>
        <taxon>Embryophyta</taxon>
        <taxon>Tracheophyta</taxon>
        <taxon>Spermatophyta</taxon>
        <taxon>Cycadidae</taxon>
        <taxon>Cycadales</taxon>
        <taxon>Cycadaceae</taxon>
        <taxon>Cycas</taxon>
    </lineage>
</organism>
<comment type="function">
    <text evidence="6">Removal of H(2)O(2), oxidation of toxic reductants, biosynthesis and degradation of lignin, suberization, auxin catabolism, response to environmental stresses such as wounding, pathogen attack and oxidative stress. These functions might be dependent on each isozyme/isoform in each plant tissue.</text>
</comment>
<comment type="catalytic activity">
    <reaction>
        <text>2 a phenolic donor + H2O2 = 2 a phenolic radical donor + 2 H2O</text>
        <dbReference type="Rhea" id="RHEA:56136"/>
        <dbReference type="ChEBI" id="CHEBI:15377"/>
        <dbReference type="ChEBI" id="CHEBI:16240"/>
        <dbReference type="ChEBI" id="CHEBI:139520"/>
        <dbReference type="ChEBI" id="CHEBI:139521"/>
        <dbReference type="EC" id="1.11.1.7"/>
    </reaction>
</comment>
<comment type="cofactor">
    <cofactor evidence="1 3">
        <name>Ca(2+)</name>
        <dbReference type="ChEBI" id="CHEBI:29108"/>
    </cofactor>
    <text evidence="1 3">Binds 2 calcium ions per subunit.</text>
</comment>
<comment type="cofactor">
    <cofactor evidence="1 3">
        <name>heme b</name>
        <dbReference type="ChEBI" id="CHEBI:60344"/>
    </cofactor>
    <text evidence="1 3">Binds 1 heme b (iron(II)-protoporphyrin IX) group per subunit.</text>
</comment>
<comment type="subcellular location">
    <subcellularLocation>
        <location evidence="2 3">Secreted</location>
    </subcellularLocation>
    <subcellularLocation>
        <location evidence="4">Secreted</location>
        <location evidence="4">Cell wall</location>
    </subcellularLocation>
</comment>
<comment type="similarity">
    <text evidence="3">Belongs to the peroxidase family. Classical plant (class III) peroxidase subfamily.</text>
</comment>
<dbReference type="EC" id="1.11.1.7"/>
<dbReference type="GO" id="GO:0005576">
    <property type="term" value="C:extracellular region"/>
    <property type="evidence" value="ECO:0007669"/>
    <property type="project" value="UniProtKB-SubCell"/>
</dbReference>
<dbReference type="GO" id="GO:0140825">
    <property type="term" value="F:lactoperoxidase activity"/>
    <property type="evidence" value="ECO:0007669"/>
    <property type="project" value="UniProtKB-EC"/>
</dbReference>
<dbReference type="GO" id="GO:0046872">
    <property type="term" value="F:metal ion binding"/>
    <property type="evidence" value="ECO:0007669"/>
    <property type="project" value="UniProtKB-KW"/>
</dbReference>
<dbReference type="GO" id="GO:0042744">
    <property type="term" value="P:hydrogen peroxide catabolic process"/>
    <property type="evidence" value="ECO:0007669"/>
    <property type="project" value="UniProtKB-KW"/>
</dbReference>
<feature type="chain" id="PRO_0000315885" description="Peroxidase 3">
    <location>
        <begin position="1" status="less than"/>
        <end position="15" status="greater than"/>
    </location>
</feature>
<feature type="non-terminal residue" evidence="5">
    <location>
        <position position="1"/>
    </location>
</feature>
<feature type="non-terminal residue" evidence="5">
    <location>
        <position position="15"/>
    </location>
</feature>
<sequence length="15" mass="1603">MGQLNVLTGSKGEIR</sequence>
<keyword id="KW-0106">Calcium</keyword>
<keyword id="KW-0134">Cell wall</keyword>
<keyword id="KW-0903">Direct protein sequencing</keyword>
<keyword id="KW-0349">Heme</keyword>
<keyword id="KW-0376">Hydrogen peroxide</keyword>
<keyword id="KW-0408">Iron</keyword>
<keyword id="KW-0479">Metal-binding</keyword>
<keyword id="KW-0560">Oxidoreductase</keyword>
<keyword id="KW-0575">Peroxidase</keyword>
<keyword id="KW-0964">Secreted</keyword>
<protein>
    <recommendedName>
        <fullName>Peroxidase 3</fullName>
        <ecNumber>1.11.1.7</ecNumber>
    </recommendedName>
</protein>
<accession>P85348</accession>
<evidence type="ECO:0000250" key="1">
    <source>
        <dbReference type="UniProtKB" id="P22195"/>
    </source>
</evidence>
<evidence type="ECO:0000250" key="2">
    <source>
        <dbReference type="UniProtKB" id="P84516"/>
    </source>
</evidence>
<evidence type="ECO:0000255" key="3">
    <source>
        <dbReference type="PROSITE-ProRule" id="PRU00297"/>
    </source>
</evidence>
<evidence type="ECO:0000269" key="4">
    <source>
    </source>
</evidence>
<evidence type="ECO:0000303" key="5">
    <source>
    </source>
</evidence>
<evidence type="ECO:0000305" key="6"/>